<accession>Q07698</accession>
<gene>
    <name type="primary">abcA</name>
</gene>
<reference key="1">
    <citation type="journal article" date="1993" name="J. Bacteriol.">
        <title>An Aeromonas salmonicida gene which influences a-protein expression in Escherichia coli encodes a protein containing an ATP-binding cassette and maps beside the surface array protein gene.</title>
        <authorList>
            <person name="Chu S."/>
            <person name="Trust T.J."/>
        </authorList>
    </citation>
    <scope>NUCLEOTIDE SEQUENCE [GENOMIC DNA]</scope>
    <source>
        <strain>A450</strain>
    </source>
</reference>
<feature type="chain" id="PRO_0000091920" description="ABC transporter protein AbcA">
    <location>
        <begin position="1"/>
        <end position="308"/>
    </location>
</feature>
<feature type="domain" description="ABC transporter" evidence="1">
    <location>
        <begin position="6"/>
        <end position="245"/>
    </location>
</feature>
<feature type="binding site" evidence="1">
    <location>
        <begin position="58"/>
        <end position="65"/>
    </location>
    <ligand>
        <name>ATP</name>
        <dbReference type="ChEBI" id="CHEBI:30616"/>
    </ligand>
</feature>
<organism>
    <name type="scientific">Aeromonas salmonicida</name>
    <dbReference type="NCBI Taxonomy" id="645"/>
    <lineage>
        <taxon>Bacteria</taxon>
        <taxon>Pseudomonadati</taxon>
        <taxon>Pseudomonadota</taxon>
        <taxon>Gammaproteobacteria</taxon>
        <taxon>Aeromonadales</taxon>
        <taxon>Aeromonadaceae</taxon>
        <taxon>Aeromonas</taxon>
    </lineage>
</organism>
<name>ABCA_AERSA</name>
<dbReference type="EMBL" id="L11870">
    <property type="protein sequence ID" value="AAA21933.1"/>
    <property type="molecule type" value="Genomic_DNA"/>
</dbReference>
<dbReference type="PIR" id="A36918">
    <property type="entry name" value="A36918"/>
</dbReference>
<dbReference type="SMR" id="Q07698"/>
<dbReference type="STRING" id="1233098.GCA_000315855_02713"/>
<dbReference type="GO" id="GO:0016020">
    <property type="term" value="C:membrane"/>
    <property type="evidence" value="ECO:0007669"/>
    <property type="project" value="InterPro"/>
</dbReference>
<dbReference type="GO" id="GO:0140359">
    <property type="term" value="F:ABC-type transporter activity"/>
    <property type="evidence" value="ECO:0007669"/>
    <property type="project" value="InterPro"/>
</dbReference>
<dbReference type="GO" id="GO:0005524">
    <property type="term" value="F:ATP binding"/>
    <property type="evidence" value="ECO:0007669"/>
    <property type="project" value="UniProtKB-KW"/>
</dbReference>
<dbReference type="GO" id="GO:0016887">
    <property type="term" value="F:ATP hydrolysis activity"/>
    <property type="evidence" value="ECO:0007669"/>
    <property type="project" value="InterPro"/>
</dbReference>
<dbReference type="CDD" id="cd03220">
    <property type="entry name" value="ABC_KpsT_Wzt"/>
    <property type="match status" value="1"/>
</dbReference>
<dbReference type="Gene3D" id="3.40.50.300">
    <property type="entry name" value="P-loop containing nucleotide triphosphate hydrolases"/>
    <property type="match status" value="1"/>
</dbReference>
<dbReference type="InterPro" id="IPR003593">
    <property type="entry name" value="AAA+_ATPase"/>
</dbReference>
<dbReference type="InterPro" id="IPR003439">
    <property type="entry name" value="ABC_transporter-like_ATP-bd"/>
</dbReference>
<dbReference type="InterPro" id="IPR017871">
    <property type="entry name" value="ABC_transporter-like_CS"/>
</dbReference>
<dbReference type="InterPro" id="IPR015860">
    <property type="entry name" value="ABC_transpr_TagH-like"/>
</dbReference>
<dbReference type="InterPro" id="IPR050683">
    <property type="entry name" value="Bact_Polysacc_Export_ATP-bd"/>
</dbReference>
<dbReference type="InterPro" id="IPR027417">
    <property type="entry name" value="P-loop_NTPase"/>
</dbReference>
<dbReference type="PANTHER" id="PTHR46743">
    <property type="entry name" value="TEICHOIC ACIDS EXPORT ATP-BINDING PROTEIN TAGH"/>
    <property type="match status" value="1"/>
</dbReference>
<dbReference type="PANTHER" id="PTHR46743:SF2">
    <property type="entry name" value="TEICHOIC ACIDS EXPORT ATP-BINDING PROTEIN TAGH"/>
    <property type="match status" value="1"/>
</dbReference>
<dbReference type="Pfam" id="PF00005">
    <property type="entry name" value="ABC_tran"/>
    <property type="match status" value="1"/>
</dbReference>
<dbReference type="SMART" id="SM00382">
    <property type="entry name" value="AAA"/>
    <property type="match status" value="1"/>
</dbReference>
<dbReference type="SUPFAM" id="SSF52540">
    <property type="entry name" value="P-loop containing nucleoside triphosphate hydrolases"/>
    <property type="match status" value="1"/>
</dbReference>
<dbReference type="PROSITE" id="PS00211">
    <property type="entry name" value="ABC_TRANSPORTER_1"/>
    <property type="match status" value="1"/>
</dbReference>
<dbReference type="PROSITE" id="PS50893">
    <property type="entry name" value="ABC_TRANSPORTER_2"/>
    <property type="match status" value="1"/>
</dbReference>
<protein>
    <recommendedName>
        <fullName>ABC transporter protein AbcA</fullName>
    </recommendedName>
</protein>
<evidence type="ECO:0000255" key="1">
    <source>
        <dbReference type="PROSITE-ProRule" id="PRU00434"/>
    </source>
</evidence>
<evidence type="ECO:0000305" key="2"/>
<comment type="function">
    <text>Influences the expression of the surface array protein gene (vapA). May have both regulatory and transport activities.</text>
</comment>
<comment type="similarity">
    <text evidence="2">Belongs to the ABC transporter superfamily.</text>
</comment>
<sequence>MSEPVLAVSGVNKSFPIYRSPWQALWHALNPKADVKVFQALRDIELTVYRGETIGIVGHNGAGKSTLLQLITGVMQPDCGQITRTGRVVGLLELGSGFNPEFTGRENIFFNGAILGMSQREMDDRLERILSFAAIGDFIDQPVKNYSSGMMVRLAFSVIINTDPDVLIIDEALAVGDDAFQRKCYARLKQLQSQGVTILLVSHAAGSVIELCDRAVLLDRGEVLLQGEPKAVVHNYHKLLHMEGDERARFRYHLRQTGRGDSYISDESTSEPKIKSAPGILSVDLQPQSTVWYESKGAVLSDVHIESF</sequence>
<keyword id="KW-0067">ATP-binding</keyword>
<keyword id="KW-0547">Nucleotide-binding</keyword>
<keyword id="KW-0813">Transport</keyword>
<proteinExistence type="inferred from homology"/>